<comment type="function">
    <text evidence="1">Allows the formation of correctly charged Asn-tRNA(Asn) or Gln-tRNA(Gln) through the transamidation of misacylated Asp-tRNA(Asn) or Glu-tRNA(Gln) in organisms which lack either or both of asparaginyl-tRNA or glutaminyl-tRNA synthetases. The reaction takes place in the presence of glutamine and ATP through an activated phospho-Asp-tRNA(Asn) or phospho-Glu-tRNA(Gln).</text>
</comment>
<comment type="catalytic activity">
    <reaction evidence="1">
        <text>L-glutamyl-tRNA(Gln) + L-glutamine + ATP + H2O = L-glutaminyl-tRNA(Gln) + L-glutamate + ADP + phosphate + H(+)</text>
        <dbReference type="Rhea" id="RHEA:17521"/>
        <dbReference type="Rhea" id="RHEA-COMP:9681"/>
        <dbReference type="Rhea" id="RHEA-COMP:9684"/>
        <dbReference type="ChEBI" id="CHEBI:15377"/>
        <dbReference type="ChEBI" id="CHEBI:15378"/>
        <dbReference type="ChEBI" id="CHEBI:29985"/>
        <dbReference type="ChEBI" id="CHEBI:30616"/>
        <dbReference type="ChEBI" id="CHEBI:43474"/>
        <dbReference type="ChEBI" id="CHEBI:58359"/>
        <dbReference type="ChEBI" id="CHEBI:78520"/>
        <dbReference type="ChEBI" id="CHEBI:78521"/>
        <dbReference type="ChEBI" id="CHEBI:456216"/>
    </reaction>
</comment>
<comment type="catalytic activity">
    <reaction evidence="1">
        <text>L-aspartyl-tRNA(Asn) + L-glutamine + ATP + H2O = L-asparaginyl-tRNA(Asn) + L-glutamate + ADP + phosphate + 2 H(+)</text>
        <dbReference type="Rhea" id="RHEA:14513"/>
        <dbReference type="Rhea" id="RHEA-COMP:9674"/>
        <dbReference type="Rhea" id="RHEA-COMP:9677"/>
        <dbReference type="ChEBI" id="CHEBI:15377"/>
        <dbReference type="ChEBI" id="CHEBI:15378"/>
        <dbReference type="ChEBI" id="CHEBI:29985"/>
        <dbReference type="ChEBI" id="CHEBI:30616"/>
        <dbReference type="ChEBI" id="CHEBI:43474"/>
        <dbReference type="ChEBI" id="CHEBI:58359"/>
        <dbReference type="ChEBI" id="CHEBI:78515"/>
        <dbReference type="ChEBI" id="CHEBI:78516"/>
        <dbReference type="ChEBI" id="CHEBI:456216"/>
    </reaction>
</comment>
<comment type="subunit">
    <text evidence="1">Heterotrimer of A, B and C subunits.</text>
</comment>
<comment type="similarity">
    <text evidence="1">Belongs to the GatB/GatE family. GatB subfamily.</text>
</comment>
<protein>
    <recommendedName>
        <fullName evidence="1">Aspartyl/glutamyl-tRNA(Asn/Gln) amidotransferase subunit B</fullName>
        <shortName evidence="1">Asp/Glu-ADT subunit B</shortName>
        <ecNumber evidence="1">6.3.5.-</ecNumber>
    </recommendedName>
</protein>
<dbReference type="EC" id="6.3.5.-" evidence="1"/>
<dbReference type="EMBL" id="AE004969">
    <property type="protein sequence ID" value="AAW89387.1"/>
    <property type="molecule type" value="Genomic_DNA"/>
</dbReference>
<dbReference type="RefSeq" id="WP_003688837.1">
    <property type="nucleotide sequence ID" value="NC_002946.2"/>
</dbReference>
<dbReference type="RefSeq" id="YP_207799.1">
    <property type="nucleotide sequence ID" value="NC_002946.2"/>
</dbReference>
<dbReference type="SMR" id="Q5F8V0"/>
<dbReference type="STRING" id="242231.NGO_0660"/>
<dbReference type="KEGG" id="ngo:NGO_0660"/>
<dbReference type="PATRIC" id="fig|242231.10.peg.780"/>
<dbReference type="HOGENOM" id="CLU_019240_0_0_4"/>
<dbReference type="Proteomes" id="UP000000535">
    <property type="component" value="Chromosome"/>
</dbReference>
<dbReference type="GO" id="GO:0050566">
    <property type="term" value="F:asparaginyl-tRNA synthase (glutamine-hydrolyzing) activity"/>
    <property type="evidence" value="ECO:0007669"/>
    <property type="project" value="RHEA"/>
</dbReference>
<dbReference type="GO" id="GO:0005524">
    <property type="term" value="F:ATP binding"/>
    <property type="evidence" value="ECO:0007669"/>
    <property type="project" value="UniProtKB-KW"/>
</dbReference>
<dbReference type="GO" id="GO:0050567">
    <property type="term" value="F:glutaminyl-tRNA synthase (glutamine-hydrolyzing) activity"/>
    <property type="evidence" value="ECO:0007669"/>
    <property type="project" value="UniProtKB-UniRule"/>
</dbReference>
<dbReference type="GO" id="GO:0070681">
    <property type="term" value="P:glutaminyl-tRNAGln biosynthesis via transamidation"/>
    <property type="evidence" value="ECO:0007669"/>
    <property type="project" value="TreeGrafter"/>
</dbReference>
<dbReference type="GO" id="GO:0006412">
    <property type="term" value="P:translation"/>
    <property type="evidence" value="ECO:0007669"/>
    <property type="project" value="UniProtKB-UniRule"/>
</dbReference>
<dbReference type="FunFam" id="1.10.10.410:FF:000001">
    <property type="entry name" value="Aspartyl/glutamyl-tRNA(Asn/Gln) amidotransferase subunit B"/>
    <property type="match status" value="1"/>
</dbReference>
<dbReference type="FunFam" id="1.10.150.380:FF:000001">
    <property type="entry name" value="Aspartyl/glutamyl-tRNA(Asn/Gln) amidotransferase subunit B"/>
    <property type="match status" value="1"/>
</dbReference>
<dbReference type="Gene3D" id="1.10.10.410">
    <property type="match status" value="1"/>
</dbReference>
<dbReference type="Gene3D" id="1.10.150.380">
    <property type="entry name" value="GatB domain, N-terminal subdomain"/>
    <property type="match status" value="1"/>
</dbReference>
<dbReference type="HAMAP" id="MF_00121">
    <property type="entry name" value="GatB"/>
    <property type="match status" value="1"/>
</dbReference>
<dbReference type="InterPro" id="IPR017959">
    <property type="entry name" value="Asn/Gln-tRNA_amidoTrfase_suB/E"/>
</dbReference>
<dbReference type="InterPro" id="IPR006075">
    <property type="entry name" value="Asn/Gln-tRNA_Trfase_suB/E_cat"/>
</dbReference>
<dbReference type="InterPro" id="IPR018027">
    <property type="entry name" value="Asn/Gln_amidotransferase"/>
</dbReference>
<dbReference type="InterPro" id="IPR003789">
    <property type="entry name" value="Asn/Gln_tRNA_amidoTrase-B-like"/>
</dbReference>
<dbReference type="InterPro" id="IPR004413">
    <property type="entry name" value="GatB"/>
</dbReference>
<dbReference type="InterPro" id="IPR042114">
    <property type="entry name" value="GatB_C_1"/>
</dbReference>
<dbReference type="InterPro" id="IPR023168">
    <property type="entry name" value="GatB_Yqey_C_2"/>
</dbReference>
<dbReference type="InterPro" id="IPR017958">
    <property type="entry name" value="Gln-tRNA_amidoTrfase_suB_CS"/>
</dbReference>
<dbReference type="InterPro" id="IPR014746">
    <property type="entry name" value="Gln_synth/guanido_kin_cat_dom"/>
</dbReference>
<dbReference type="NCBIfam" id="TIGR00133">
    <property type="entry name" value="gatB"/>
    <property type="match status" value="1"/>
</dbReference>
<dbReference type="NCBIfam" id="NF004012">
    <property type="entry name" value="PRK05477.1-2"/>
    <property type="match status" value="1"/>
</dbReference>
<dbReference type="NCBIfam" id="NF004014">
    <property type="entry name" value="PRK05477.1-4"/>
    <property type="match status" value="1"/>
</dbReference>
<dbReference type="NCBIfam" id="NF004015">
    <property type="entry name" value="PRK05477.1-5"/>
    <property type="match status" value="1"/>
</dbReference>
<dbReference type="PANTHER" id="PTHR11659">
    <property type="entry name" value="GLUTAMYL-TRNA GLN AMIDOTRANSFERASE SUBUNIT B MITOCHONDRIAL AND PROKARYOTIC PET112-RELATED"/>
    <property type="match status" value="1"/>
</dbReference>
<dbReference type="PANTHER" id="PTHR11659:SF0">
    <property type="entry name" value="GLUTAMYL-TRNA(GLN) AMIDOTRANSFERASE SUBUNIT B, MITOCHONDRIAL"/>
    <property type="match status" value="1"/>
</dbReference>
<dbReference type="Pfam" id="PF02934">
    <property type="entry name" value="GatB_N"/>
    <property type="match status" value="1"/>
</dbReference>
<dbReference type="Pfam" id="PF02637">
    <property type="entry name" value="GatB_Yqey"/>
    <property type="match status" value="1"/>
</dbReference>
<dbReference type="SMART" id="SM00845">
    <property type="entry name" value="GatB_Yqey"/>
    <property type="match status" value="1"/>
</dbReference>
<dbReference type="SUPFAM" id="SSF89095">
    <property type="entry name" value="GatB/YqeY motif"/>
    <property type="match status" value="1"/>
</dbReference>
<dbReference type="SUPFAM" id="SSF55931">
    <property type="entry name" value="Glutamine synthetase/guanido kinase"/>
    <property type="match status" value="1"/>
</dbReference>
<dbReference type="PROSITE" id="PS01234">
    <property type="entry name" value="GATB"/>
    <property type="match status" value="1"/>
</dbReference>
<evidence type="ECO:0000255" key="1">
    <source>
        <dbReference type="HAMAP-Rule" id="MF_00121"/>
    </source>
</evidence>
<accession>Q5F8V0</accession>
<reference key="1">
    <citation type="submission" date="2003-03" db="EMBL/GenBank/DDBJ databases">
        <title>The complete genome sequence of Neisseria gonorrhoeae.</title>
        <authorList>
            <person name="Lewis L.A."/>
            <person name="Gillaspy A.F."/>
            <person name="McLaughlin R.E."/>
            <person name="Gipson M."/>
            <person name="Ducey T.F."/>
            <person name="Ownbey T."/>
            <person name="Hartman K."/>
            <person name="Nydick C."/>
            <person name="Carson M.B."/>
            <person name="Vaughn J."/>
            <person name="Thomson C."/>
            <person name="Song L."/>
            <person name="Lin S."/>
            <person name="Yuan X."/>
            <person name="Najar F."/>
            <person name="Zhan M."/>
            <person name="Ren Q."/>
            <person name="Zhu H."/>
            <person name="Qi S."/>
            <person name="Kenton S.M."/>
            <person name="Lai H."/>
            <person name="White J.D."/>
            <person name="Clifton S."/>
            <person name="Roe B.A."/>
            <person name="Dyer D.W."/>
        </authorList>
    </citation>
    <scope>NUCLEOTIDE SEQUENCE [LARGE SCALE GENOMIC DNA]</scope>
    <source>
        <strain>ATCC 700825 / FA 1090</strain>
    </source>
</reference>
<keyword id="KW-0067">ATP-binding</keyword>
<keyword id="KW-0436">Ligase</keyword>
<keyword id="KW-0547">Nucleotide-binding</keyword>
<keyword id="KW-0648">Protein biosynthesis</keyword>
<keyword id="KW-1185">Reference proteome</keyword>
<gene>
    <name evidence="1" type="primary">gatB</name>
    <name type="ordered locus">NGO_0660</name>
</gene>
<name>GATB_NEIG1</name>
<sequence length="476" mass="51713">MTWETVIGLEIHVQLNTKSKIFSGASTAFGAEPNAHASVVECALPGVLPVMNREVVEKAIKLGLALDAKINRKNVFDRKNYFYPDLPKGYQISQLDLPIVEHGKLEIVVGGDVKTINVTRAHMEEDAGKSVHEGLNGATGIDLNRAGTPLLEVVSEPEMRSAAEAVAYAKALHSLVTWLDICDGNMAEGSFRIDANVSVRPKGQAEFGTRREIKNLNSFRFLDQAINYEAEAQIEILEDGGTVQQATMLFDPEKGETRVMRLKEDAHDYGYFPDPDLLPVIISDAQMQKAKAEMPELPKEMAARFVADYGVSEYDARLLTASRVQAAYFEEAAKESGQGKPTANWMNGELAATLNKEGMELADSPITAPRLAALVGKIADGTLSGKLAKKAFEAMWAEPETSIAEIIEKHSLQQMTDTGAVEAMVDEVLANNAKAVEQFKSGNEKALNAIVGQVMKTSKGKANPAQVQELIKAKLA</sequence>
<proteinExistence type="inferred from homology"/>
<organism>
    <name type="scientific">Neisseria gonorrhoeae (strain ATCC 700825 / FA 1090)</name>
    <dbReference type="NCBI Taxonomy" id="242231"/>
    <lineage>
        <taxon>Bacteria</taxon>
        <taxon>Pseudomonadati</taxon>
        <taxon>Pseudomonadota</taxon>
        <taxon>Betaproteobacteria</taxon>
        <taxon>Neisseriales</taxon>
        <taxon>Neisseriaceae</taxon>
        <taxon>Neisseria</taxon>
    </lineage>
</organism>
<feature type="chain" id="PRO_0000241243" description="Aspartyl/glutamyl-tRNA(Asn/Gln) amidotransferase subunit B">
    <location>
        <begin position="1"/>
        <end position="476"/>
    </location>
</feature>